<sequence>MAEGTSQRPLTPLSQAFLSTNTLSPASSPLTFHSEAASLRRKRSNFFPKLDELNGAQDEEMRGLNIPGGSGYLENRYGRDKFTFSDAAVNSAGMGGSGIFSHNNADDGLGDGSSTVLPSSLKQMLDPEISTANNPSAKPRRTRLQTAWKEATNSAGLSLRSASALDVLKNSGPATTSLLSSTTYPFDSLNAFNEPSHSHVPNSASSTALSRGMSNSVTLTAPPEPDEETIPTAIVIKNIPFSLKKEVLFKVFTALDIPRPYAFNYHFDNGVFRGLAFANFHSPEEAKTVVQVLNGYEITGRRLRVEWKRQLPPAERERVERGKQEKRAVEERKNQLKSPFSVANIGAGIDFDLNDPAILNVYSHILLFYYRSDNTNDLVFDSSTTQEERRVAALLASRLNLNHSVTGDGEAKQVVITMPSTHFTPANNSSANHSPLMAPNASTLNPSSLGASNLSQPSLANHLSSSGLFDNGLFSSGGLSSNFSSLRRPAPSMHLADSIRSLRGLNDSKAFSDIRSMPATPLELATPFANLNVSSPLDRNATNSSNTLNGSAMNDYFASLTPSNTGAIGSRTFTKN</sequence>
<name>CIP2_SCHPO</name>
<organism>
    <name type="scientific">Schizosaccharomyces pombe (strain 972 / ATCC 24843)</name>
    <name type="common">Fission yeast</name>
    <dbReference type="NCBI Taxonomy" id="284812"/>
    <lineage>
        <taxon>Eukaryota</taxon>
        <taxon>Fungi</taxon>
        <taxon>Dikarya</taxon>
        <taxon>Ascomycota</taxon>
        <taxon>Taphrinomycotina</taxon>
        <taxon>Schizosaccharomycetes</taxon>
        <taxon>Schizosaccharomycetales</taxon>
        <taxon>Schizosaccharomycetaceae</taxon>
        <taxon>Schizosaccharomyces</taxon>
    </lineage>
</organism>
<protein>
    <recommendedName>
        <fullName>RNA-binding post-transcriptional regulator cip2</fullName>
    </recommendedName>
    <alternativeName>
        <fullName>Csx1-interacting protein 2</fullName>
    </alternativeName>
</protein>
<accession>Q09868</accession>
<accession>Q9USF7</accession>
<proteinExistence type="evidence at protein level"/>
<dbReference type="EMBL" id="CU329670">
    <property type="protein sequence ID" value="CAA91498.1"/>
    <property type="molecule type" value="Genomic_DNA"/>
</dbReference>
<dbReference type="EMBL" id="AB027784">
    <property type="protein sequence ID" value="BAA87088.1"/>
    <property type="molecule type" value="Genomic_DNA"/>
</dbReference>
<dbReference type="PIR" id="S62534">
    <property type="entry name" value="S62534"/>
</dbReference>
<dbReference type="RefSeq" id="NP_592895.1">
    <property type="nucleotide sequence ID" value="NM_001018295.2"/>
</dbReference>
<dbReference type="BioGRID" id="279571">
    <property type="interactions" value="38"/>
</dbReference>
<dbReference type="FunCoup" id="Q09868">
    <property type="interactions" value="350"/>
</dbReference>
<dbReference type="IntAct" id="Q09868">
    <property type="interactions" value="3"/>
</dbReference>
<dbReference type="STRING" id="284812.Q09868"/>
<dbReference type="iPTMnet" id="Q09868"/>
<dbReference type="PaxDb" id="4896-SPAC12G12.03.1"/>
<dbReference type="EnsemblFungi" id="SPAC12G12.03.1">
    <property type="protein sequence ID" value="SPAC12G12.03.1:pep"/>
    <property type="gene ID" value="SPAC12G12.03"/>
</dbReference>
<dbReference type="GeneID" id="2543139"/>
<dbReference type="KEGG" id="spo:2543139"/>
<dbReference type="PomBase" id="SPAC12G12.03">
    <property type="gene designation" value="cip2"/>
</dbReference>
<dbReference type="VEuPathDB" id="FungiDB:SPAC12G12.03"/>
<dbReference type="eggNOG" id="KOG0108">
    <property type="taxonomic scope" value="Eukaryota"/>
</dbReference>
<dbReference type="HOGENOM" id="CLU_473406_0_0_1"/>
<dbReference type="InParanoid" id="Q09868"/>
<dbReference type="OMA" id="LFYHRTD"/>
<dbReference type="PhylomeDB" id="Q09868"/>
<dbReference type="PRO" id="PR:Q09868"/>
<dbReference type="Proteomes" id="UP000002485">
    <property type="component" value="Chromosome I"/>
</dbReference>
<dbReference type="GO" id="GO:0005737">
    <property type="term" value="C:cytoplasm"/>
    <property type="evidence" value="ECO:0000314"/>
    <property type="project" value="PomBase"/>
</dbReference>
<dbReference type="GO" id="GO:0005829">
    <property type="term" value="C:cytosol"/>
    <property type="evidence" value="ECO:0007005"/>
    <property type="project" value="PomBase"/>
</dbReference>
<dbReference type="GO" id="GO:0005634">
    <property type="term" value="C:nucleus"/>
    <property type="evidence" value="ECO:0000318"/>
    <property type="project" value="GO_Central"/>
</dbReference>
<dbReference type="GO" id="GO:0071014">
    <property type="term" value="C:post-mRNA release spliceosomal complex"/>
    <property type="evidence" value="ECO:0000314"/>
    <property type="project" value="PomBase"/>
</dbReference>
<dbReference type="GO" id="GO:0003729">
    <property type="term" value="F:mRNA binding"/>
    <property type="evidence" value="ECO:0000318"/>
    <property type="project" value="GO_Central"/>
</dbReference>
<dbReference type="CDD" id="cd02639">
    <property type="entry name" value="R3H_RRM"/>
    <property type="match status" value="1"/>
</dbReference>
<dbReference type="CDD" id="cd12253">
    <property type="entry name" value="RRM_PIN4_like"/>
    <property type="match status" value="1"/>
</dbReference>
<dbReference type="FunFam" id="3.30.70.330:FF:000183">
    <property type="entry name" value="R3H domain containing protein"/>
    <property type="match status" value="1"/>
</dbReference>
<dbReference type="Gene3D" id="3.30.70.330">
    <property type="match status" value="1"/>
</dbReference>
<dbReference type="Gene3D" id="3.30.1370.50">
    <property type="entry name" value="R3H-like domain"/>
    <property type="match status" value="1"/>
</dbReference>
<dbReference type="InterPro" id="IPR012677">
    <property type="entry name" value="Nucleotide-bd_a/b_plait_sf"/>
</dbReference>
<dbReference type="InterPro" id="IPR034186">
    <property type="entry name" value="PIN4-like_RRM"/>
</dbReference>
<dbReference type="InterPro" id="IPR034069">
    <property type="entry name" value="R3H_Cip2"/>
</dbReference>
<dbReference type="InterPro" id="IPR001374">
    <property type="entry name" value="R3H_dom"/>
</dbReference>
<dbReference type="InterPro" id="IPR036867">
    <property type="entry name" value="R3H_dom_sf"/>
</dbReference>
<dbReference type="InterPro" id="IPR035979">
    <property type="entry name" value="RBD_domain_sf"/>
</dbReference>
<dbReference type="InterPro" id="IPR000504">
    <property type="entry name" value="RRM_dom"/>
</dbReference>
<dbReference type="InterPro" id="IPR050374">
    <property type="entry name" value="RRT5_SRSF_SR"/>
</dbReference>
<dbReference type="PANTHER" id="PTHR23003">
    <property type="entry name" value="RNA RECOGNITION MOTIF RRM DOMAIN CONTAINING PROTEIN"/>
    <property type="match status" value="1"/>
</dbReference>
<dbReference type="PANTHER" id="PTHR23003:SF17">
    <property type="entry name" value="RNA-BINDING PROTEIN PIN4"/>
    <property type="match status" value="1"/>
</dbReference>
<dbReference type="Pfam" id="PF00076">
    <property type="entry name" value="RRM_1"/>
    <property type="match status" value="1"/>
</dbReference>
<dbReference type="SMART" id="SM00360">
    <property type="entry name" value="RRM"/>
    <property type="match status" value="1"/>
</dbReference>
<dbReference type="SUPFAM" id="SSF54928">
    <property type="entry name" value="RNA-binding domain, RBD"/>
    <property type="match status" value="1"/>
</dbReference>
<dbReference type="PROSITE" id="PS51061">
    <property type="entry name" value="R3H"/>
    <property type="match status" value="1"/>
</dbReference>
<dbReference type="PROSITE" id="PS50102">
    <property type="entry name" value="RRM"/>
    <property type="match status" value="1"/>
</dbReference>
<comment type="function">
    <text evidence="4">Regulates global gene expression after oxidative stress. Interacts and stabilizes mRNAs and may regulate their transition between different cytoplasmic components after oxidative stress.</text>
</comment>
<comment type="subunit">
    <text evidence="4">Interacts with csx1.</text>
</comment>
<comment type="subcellular location">
    <subcellularLocation>
        <location evidence="3 4 5">Cytoplasm</location>
    </subcellularLocation>
</comment>
<comment type="PTM">
    <text evidence="4">Phosphorylated by sty1.</text>
</comment>
<gene>
    <name type="primary">cip2</name>
    <name type="ORF">SPAC12G12.03</name>
</gene>
<evidence type="ECO:0000255" key="1">
    <source>
        <dbReference type="PROSITE-ProRule" id="PRU00176"/>
    </source>
</evidence>
<evidence type="ECO:0000255" key="2">
    <source>
        <dbReference type="PROSITE-ProRule" id="PRU00382"/>
    </source>
</evidence>
<evidence type="ECO:0000269" key="3">
    <source>
    </source>
</evidence>
<evidence type="ECO:0000269" key="4">
    <source>
    </source>
</evidence>
<evidence type="ECO:0000269" key="5">
    <source>
    </source>
</evidence>
<feature type="chain" id="PRO_0000082018" description="RNA-binding post-transcriptional regulator cip2">
    <location>
        <begin position="1"/>
        <end position="576"/>
    </location>
</feature>
<feature type="domain" description="RRM" evidence="1">
    <location>
        <begin position="232"/>
        <end position="310"/>
    </location>
</feature>
<feature type="domain" description="R3H" evidence="2">
    <location>
        <begin position="355"/>
        <end position="420"/>
    </location>
</feature>
<reference key="1">
    <citation type="journal article" date="2002" name="Nature">
        <title>The genome sequence of Schizosaccharomyces pombe.</title>
        <authorList>
            <person name="Wood V."/>
            <person name="Gwilliam R."/>
            <person name="Rajandream M.A."/>
            <person name="Lyne M.H."/>
            <person name="Lyne R."/>
            <person name="Stewart A."/>
            <person name="Sgouros J.G."/>
            <person name="Peat N."/>
            <person name="Hayles J."/>
            <person name="Baker S.G."/>
            <person name="Basham D."/>
            <person name="Bowman S."/>
            <person name="Brooks K."/>
            <person name="Brown D."/>
            <person name="Brown S."/>
            <person name="Chillingworth T."/>
            <person name="Churcher C.M."/>
            <person name="Collins M."/>
            <person name="Connor R."/>
            <person name="Cronin A."/>
            <person name="Davis P."/>
            <person name="Feltwell T."/>
            <person name="Fraser A."/>
            <person name="Gentles S."/>
            <person name="Goble A."/>
            <person name="Hamlin N."/>
            <person name="Harris D.E."/>
            <person name="Hidalgo J."/>
            <person name="Hodgson G."/>
            <person name="Holroyd S."/>
            <person name="Hornsby T."/>
            <person name="Howarth S."/>
            <person name="Huckle E.J."/>
            <person name="Hunt S."/>
            <person name="Jagels K."/>
            <person name="James K.D."/>
            <person name="Jones L."/>
            <person name="Jones M."/>
            <person name="Leather S."/>
            <person name="McDonald S."/>
            <person name="McLean J."/>
            <person name="Mooney P."/>
            <person name="Moule S."/>
            <person name="Mungall K.L."/>
            <person name="Murphy L.D."/>
            <person name="Niblett D."/>
            <person name="Odell C."/>
            <person name="Oliver K."/>
            <person name="O'Neil S."/>
            <person name="Pearson D."/>
            <person name="Quail M.A."/>
            <person name="Rabbinowitsch E."/>
            <person name="Rutherford K.M."/>
            <person name="Rutter S."/>
            <person name="Saunders D."/>
            <person name="Seeger K."/>
            <person name="Sharp S."/>
            <person name="Skelton J."/>
            <person name="Simmonds M.N."/>
            <person name="Squares R."/>
            <person name="Squares S."/>
            <person name="Stevens K."/>
            <person name="Taylor K."/>
            <person name="Taylor R.G."/>
            <person name="Tivey A."/>
            <person name="Walsh S.V."/>
            <person name="Warren T."/>
            <person name="Whitehead S."/>
            <person name="Woodward J.R."/>
            <person name="Volckaert G."/>
            <person name="Aert R."/>
            <person name="Robben J."/>
            <person name="Grymonprez B."/>
            <person name="Weltjens I."/>
            <person name="Vanstreels E."/>
            <person name="Rieger M."/>
            <person name="Schaefer M."/>
            <person name="Mueller-Auer S."/>
            <person name="Gabel C."/>
            <person name="Fuchs M."/>
            <person name="Duesterhoeft A."/>
            <person name="Fritzc C."/>
            <person name="Holzer E."/>
            <person name="Moestl D."/>
            <person name="Hilbert H."/>
            <person name="Borzym K."/>
            <person name="Langer I."/>
            <person name="Beck A."/>
            <person name="Lehrach H."/>
            <person name="Reinhardt R."/>
            <person name="Pohl T.M."/>
            <person name="Eger P."/>
            <person name="Zimmermann W."/>
            <person name="Wedler H."/>
            <person name="Wambutt R."/>
            <person name="Purnelle B."/>
            <person name="Goffeau A."/>
            <person name="Cadieu E."/>
            <person name="Dreano S."/>
            <person name="Gloux S."/>
            <person name="Lelaure V."/>
            <person name="Mottier S."/>
            <person name="Galibert F."/>
            <person name="Aves S.J."/>
            <person name="Xiang Z."/>
            <person name="Hunt C."/>
            <person name="Moore K."/>
            <person name="Hurst S.M."/>
            <person name="Lucas M."/>
            <person name="Rochet M."/>
            <person name="Gaillardin C."/>
            <person name="Tallada V.A."/>
            <person name="Garzon A."/>
            <person name="Thode G."/>
            <person name="Daga R.R."/>
            <person name="Cruzado L."/>
            <person name="Jimenez J."/>
            <person name="Sanchez M."/>
            <person name="del Rey F."/>
            <person name="Benito J."/>
            <person name="Dominguez A."/>
            <person name="Revuelta J.L."/>
            <person name="Moreno S."/>
            <person name="Armstrong J."/>
            <person name="Forsburg S.L."/>
            <person name="Cerutti L."/>
            <person name="Lowe T."/>
            <person name="McCombie W.R."/>
            <person name="Paulsen I."/>
            <person name="Potashkin J."/>
            <person name="Shpakovski G.V."/>
            <person name="Ussery D."/>
            <person name="Barrell B.G."/>
            <person name="Nurse P."/>
        </authorList>
    </citation>
    <scope>NUCLEOTIDE SEQUENCE [LARGE SCALE GENOMIC DNA]</scope>
    <source>
        <strain>972 / ATCC 24843</strain>
    </source>
</reference>
<reference key="2">
    <citation type="journal article" date="2000" name="Genes Cells">
        <title>Large-scale screening of intracellular protein localization in living fission yeast cells by the use of a GFP-fusion genomic DNA library.</title>
        <authorList>
            <person name="Ding D.-Q."/>
            <person name="Tomita Y."/>
            <person name="Yamamoto A."/>
            <person name="Chikashige Y."/>
            <person name="Haraguchi T."/>
            <person name="Hiraoka Y."/>
        </authorList>
    </citation>
    <scope>NUCLEOTIDE SEQUENCE [LARGE SCALE GENOMIC DNA] OF 383-570</scope>
    <scope>SUBCELLULAR LOCATION</scope>
    <source>
        <strain>ATCC 38364 / 968</strain>
    </source>
</reference>
<reference key="3">
    <citation type="journal article" date="2006" name="Mol. Biol. Cell">
        <title>Cip1 and Cip2 are novel RNA-recognition-motif proteins that counteract Csx1 function during oxidative stress.</title>
        <authorList>
            <person name="Martin V."/>
            <person name="Rodriguez-Gabriel M.A."/>
            <person name="McDonald W.H."/>
            <person name="Watt S."/>
            <person name="Yates J.R. III"/>
            <person name="Baehler J."/>
            <person name="Russell P."/>
        </authorList>
    </citation>
    <scope>PARTIAL PROTEIN SEQUENCE</scope>
    <scope>FUNCTION</scope>
    <scope>INTERACTION WITH CSX1</scope>
    <scope>SUBCELLULAR LOCATION</scope>
    <scope>PHOSPHORYLATION</scope>
</reference>
<reference key="4">
    <citation type="journal article" date="2006" name="Nat. Biotechnol.">
        <title>ORFeome cloning and global analysis of protein localization in the fission yeast Schizosaccharomyces pombe.</title>
        <authorList>
            <person name="Matsuyama A."/>
            <person name="Arai R."/>
            <person name="Yashiroda Y."/>
            <person name="Shirai A."/>
            <person name="Kamata A."/>
            <person name="Sekido S."/>
            <person name="Kobayashi Y."/>
            <person name="Hashimoto A."/>
            <person name="Hamamoto M."/>
            <person name="Hiraoka Y."/>
            <person name="Horinouchi S."/>
            <person name="Yoshida M."/>
        </authorList>
    </citation>
    <scope>SUBCELLULAR LOCATION [LARGE SCALE ANALYSIS]</scope>
</reference>
<keyword id="KW-0963">Cytoplasm</keyword>
<keyword id="KW-0903">Direct protein sequencing</keyword>
<keyword id="KW-0597">Phosphoprotein</keyword>
<keyword id="KW-1185">Reference proteome</keyword>
<keyword id="KW-0677">Repeat</keyword>
<keyword id="KW-0694">RNA-binding</keyword>